<comment type="subcellular location">
    <subcellularLocation>
        <location evidence="2">Cell membrane</location>
        <topology evidence="2">Multi-pass membrane protein</topology>
    </subcellularLocation>
</comment>
<comment type="similarity">
    <text evidence="2">Belongs to the BI1 family.</text>
</comment>
<proteinExistence type="inferred from homology"/>
<evidence type="ECO:0000255" key="1"/>
<evidence type="ECO:0000305" key="2"/>
<organism>
    <name type="scientific">Vibrio cholerae serotype O1 (strain ATCC 39315 / El Tor Inaba N16961)</name>
    <dbReference type="NCBI Taxonomy" id="243277"/>
    <lineage>
        <taxon>Bacteria</taxon>
        <taxon>Pseudomonadati</taxon>
        <taxon>Pseudomonadota</taxon>
        <taxon>Gammaproteobacteria</taxon>
        <taxon>Vibrionales</taxon>
        <taxon>Vibrionaceae</taxon>
        <taxon>Vibrio</taxon>
    </lineage>
</organism>
<keyword id="KW-1003">Cell membrane</keyword>
<keyword id="KW-0472">Membrane</keyword>
<keyword id="KW-1185">Reference proteome</keyword>
<keyword id="KW-0812">Transmembrane</keyword>
<keyword id="KW-1133">Transmembrane helix</keyword>
<accession>Q9KSA1</accession>
<sequence>MNTPMFTRTSSLERTLETNKVLKNTYFLLSMTLVTSAIAAMATMAIGISPIVALVMQLAAIGILFFVMPKAINSSSGLVWTFVFTGLMGGALGPMLNFYAAMPNGPIVIAQALGLTGMVFLGLSAYTITSKKDFSFMRNFLFAGLIIVIVAALINIFVGSTVAHLAISSVSALVFSGFILFDTSRIVRGEETNYISATISMYLNILNLFTSLLSILGIMNNND</sequence>
<protein>
    <recommendedName>
        <fullName>Uncharacterized membrane protein VC_1358</fullName>
    </recommendedName>
</protein>
<reference key="1">
    <citation type="journal article" date="2000" name="Nature">
        <title>DNA sequence of both chromosomes of the cholera pathogen Vibrio cholerae.</title>
        <authorList>
            <person name="Heidelberg J.F."/>
            <person name="Eisen J.A."/>
            <person name="Nelson W.C."/>
            <person name="Clayton R.A."/>
            <person name="Gwinn M.L."/>
            <person name="Dodson R.J."/>
            <person name="Haft D.H."/>
            <person name="Hickey E.K."/>
            <person name="Peterson J.D."/>
            <person name="Umayam L.A."/>
            <person name="Gill S.R."/>
            <person name="Nelson K.E."/>
            <person name="Read T.D."/>
            <person name="Tettelin H."/>
            <person name="Richardson D.L."/>
            <person name="Ermolaeva M.D."/>
            <person name="Vamathevan J.J."/>
            <person name="Bass S."/>
            <person name="Qin H."/>
            <person name="Dragoi I."/>
            <person name="Sellers P."/>
            <person name="McDonald L.A."/>
            <person name="Utterback T.R."/>
            <person name="Fleischmann R.D."/>
            <person name="Nierman W.C."/>
            <person name="White O."/>
            <person name="Salzberg S.L."/>
            <person name="Smith H.O."/>
            <person name="Colwell R.R."/>
            <person name="Mekalanos J.J."/>
            <person name="Venter J.C."/>
            <person name="Fraser C.M."/>
        </authorList>
    </citation>
    <scope>NUCLEOTIDE SEQUENCE [LARGE SCALE GENOMIC DNA]</scope>
    <source>
        <strain>ATCC 39315 / El Tor Inaba N16961</strain>
    </source>
</reference>
<gene>
    <name type="ordered locus">VC_1358</name>
</gene>
<name>Y1358_VIBCH</name>
<feature type="chain" id="PRO_0000179117" description="Uncharacterized membrane protein VC_1358">
    <location>
        <begin position="1"/>
        <end position="223"/>
    </location>
</feature>
<feature type="transmembrane region" description="Helical" evidence="1">
    <location>
        <begin position="25"/>
        <end position="45"/>
    </location>
</feature>
<feature type="transmembrane region" description="Helical" evidence="1">
    <location>
        <begin position="46"/>
        <end position="66"/>
    </location>
</feature>
<feature type="transmembrane region" description="Helical" evidence="1">
    <location>
        <begin position="78"/>
        <end position="98"/>
    </location>
</feature>
<feature type="transmembrane region" description="Helical" evidence="1">
    <location>
        <begin position="105"/>
        <end position="125"/>
    </location>
</feature>
<feature type="transmembrane region" description="Helical" evidence="1">
    <location>
        <begin position="140"/>
        <end position="160"/>
    </location>
</feature>
<feature type="transmembrane region" description="Helical" evidence="1">
    <location>
        <begin position="161"/>
        <end position="181"/>
    </location>
</feature>
<feature type="transmembrane region" description="Helical" evidence="1">
    <location>
        <begin position="199"/>
        <end position="219"/>
    </location>
</feature>
<dbReference type="EMBL" id="AE003852">
    <property type="protein sequence ID" value="AAF94516.1"/>
    <property type="molecule type" value="Genomic_DNA"/>
</dbReference>
<dbReference type="PIR" id="D82210">
    <property type="entry name" value="D82210"/>
</dbReference>
<dbReference type="RefSeq" id="NP_231002.1">
    <property type="nucleotide sequence ID" value="NC_002505.1"/>
</dbReference>
<dbReference type="RefSeq" id="WP_001095848.1">
    <property type="nucleotide sequence ID" value="NZ_LT906614.1"/>
</dbReference>
<dbReference type="SMR" id="Q9KSA1"/>
<dbReference type="STRING" id="243277.VC_1358"/>
<dbReference type="DNASU" id="2614812"/>
<dbReference type="EnsemblBacteria" id="AAF94516">
    <property type="protein sequence ID" value="AAF94516"/>
    <property type="gene ID" value="VC_1358"/>
</dbReference>
<dbReference type="KEGG" id="vch:VC_1358"/>
<dbReference type="PATRIC" id="fig|243277.26.peg.1292"/>
<dbReference type="eggNOG" id="COG0670">
    <property type="taxonomic scope" value="Bacteria"/>
</dbReference>
<dbReference type="HOGENOM" id="CLU_058671_2_1_6"/>
<dbReference type="Proteomes" id="UP000000584">
    <property type="component" value="Chromosome 1"/>
</dbReference>
<dbReference type="GO" id="GO:0005886">
    <property type="term" value="C:plasma membrane"/>
    <property type="evidence" value="ECO:0000318"/>
    <property type="project" value="GO_Central"/>
</dbReference>
<dbReference type="GO" id="GO:0005262">
    <property type="term" value="F:calcium channel activity"/>
    <property type="evidence" value="ECO:0000318"/>
    <property type="project" value="GO_Central"/>
</dbReference>
<dbReference type="GO" id="GO:0030162">
    <property type="term" value="P:regulation of proteolysis"/>
    <property type="evidence" value="ECO:0000318"/>
    <property type="project" value="GO_Central"/>
</dbReference>
<dbReference type="CDD" id="cd10433">
    <property type="entry name" value="YccA_like"/>
    <property type="match status" value="1"/>
</dbReference>
<dbReference type="InterPro" id="IPR006214">
    <property type="entry name" value="Bax_inhibitor_1-related"/>
</dbReference>
<dbReference type="PANTHER" id="PTHR23291">
    <property type="entry name" value="BAX INHIBITOR-RELATED"/>
    <property type="match status" value="1"/>
</dbReference>
<dbReference type="PANTHER" id="PTHR23291:SF115">
    <property type="entry name" value="MODULATOR OF FTSH PROTEASE YCCA"/>
    <property type="match status" value="1"/>
</dbReference>
<dbReference type="Pfam" id="PF01027">
    <property type="entry name" value="Bax1-I"/>
    <property type="match status" value="1"/>
</dbReference>